<keyword id="KW-0030">Aminoacyl-tRNA synthetase</keyword>
<keyword id="KW-0067">ATP-binding</keyword>
<keyword id="KW-0963">Cytoplasm</keyword>
<keyword id="KW-0436">Ligase</keyword>
<keyword id="KW-0479">Metal-binding</keyword>
<keyword id="KW-0547">Nucleotide-binding</keyword>
<keyword id="KW-0648">Protein biosynthesis</keyword>
<keyword id="KW-1185">Reference proteome</keyword>
<keyword id="KW-0694">RNA-binding</keyword>
<keyword id="KW-0820">tRNA-binding</keyword>
<keyword id="KW-0862">Zinc</keyword>
<accession>A5EVK6</accession>
<reference key="1">
    <citation type="journal article" date="2007" name="Nat. Biotechnol.">
        <title>Genome sequence and identification of candidate vaccine antigens from the animal pathogen Dichelobacter nodosus.</title>
        <authorList>
            <person name="Myers G.S.A."/>
            <person name="Parker D."/>
            <person name="Al-Hasani K."/>
            <person name="Kennan R.M."/>
            <person name="Seemann T."/>
            <person name="Ren Q."/>
            <person name="Badger J.H."/>
            <person name="Selengut J.D."/>
            <person name="Deboy R.T."/>
            <person name="Tettelin H."/>
            <person name="Boyce J.D."/>
            <person name="McCarl V.P."/>
            <person name="Han X."/>
            <person name="Nelson W.C."/>
            <person name="Madupu R."/>
            <person name="Mohamoud Y."/>
            <person name="Holley T."/>
            <person name="Fedorova N."/>
            <person name="Khouri H."/>
            <person name="Bottomley S.P."/>
            <person name="Whittington R.J."/>
            <person name="Adler B."/>
            <person name="Songer J.G."/>
            <person name="Rood J.I."/>
            <person name="Paulsen I.T."/>
        </authorList>
    </citation>
    <scope>NUCLEOTIDE SEQUENCE [LARGE SCALE GENOMIC DNA]</scope>
    <source>
        <strain>VCS1703A</strain>
    </source>
</reference>
<dbReference type="EC" id="6.1.1.3" evidence="1"/>
<dbReference type="EMBL" id="CP000513">
    <property type="protein sequence ID" value="ABQ13151.1"/>
    <property type="molecule type" value="Genomic_DNA"/>
</dbReference>
<dbReference type="RefSeq" id="WP_012030861.1">
    <property type="nucleotide sequence ID" value="NC_009446.1"/>
</dbReference>
<dbReference type="SMR" id="A5EVK6"/>
<dbReference type="STRING" id="246195.DNO_0527"/>
<dbReference type="KEGG" id="dno:DNO_0527"/>
<dbReference type="eggNOG" id="COG0441">
    <property type="taxonomic scope" value="Bacteria"/>
</dbReference>
<dbReference type="HOGENOM" id="CLU_008554_0_1_6"/>
<dbReference type="OrthoDB" id="9802304at2"/>
<dbReference type="Proteomes" id="UP000000248">
    <property type="component" value="Chromosome"/>
</dbReference>
<dbReference type="GO" id="GO:0005829">
    <property type="term" value="C:cytosol"/>
    <property type="evidence" value="ECO:0007669"/>
    <property type="project" value="TreeGrafter"/>
</dbReference>
<dbReference type="GO" id="GO:0005524">
    <property type="term" value="F:ATP binding"/>
    <property type="evidence" value="ECO:0007669"/>
    <property type="project" value="UniProtKB-UniRule"/>
</dbReference>
<dbReference type="GO" id="GO:0046872">
    <property type="term" value="F:metal ion binding"/>
    <property type="evidence" value="ECO:0007669"/>
    <property type="project" value="UniProtKB-KW"/>
</dbReference>
<dbReference type="GO" id="GO:0004829">
    <property type="term" value="F:threonine-tRNA ligase activity"/>
    <property type="evidence" value="ECO:0007669"/>
    <property type="project" value="UniProtKB-UniRule"/>
</dbReference>
<dbReference type="GO" id="GO:0000049">
    <property type="term" value="F:tRNA binding"/>
    <property type="evidence" value="ECO:0007669"/>
    <property type="project" value="UniProtKB-KW"/>
</dbReference>
<dbReference type="GO" id="GO:0006435">
    <property type="term" value="P:threonyl-tRNA aminoacylation"/>
    <property type="evidence" value="ECO:0007669"/>
    <property type="project" value="UniProtKB-UniRule"/>
</dbReference>
<dbReference type="CDD" id="cd01667">
    <property type="entry name" value="TGS_ThrRS"/>
    <property type="match status" value="1"/>
</dbReference>
<dbReference type="CDD" id="cd00860">
    <property type="entry name" value="ThrRS_anticodon"/>
    <property type="match status" value="1"/>
</dbReference>
<dbReference type="CDD" id="cd00771">
    <property type="entry name" value="ThrRS_core"/>
    <property type="match status" value="1"/>
</dbReference>
<dbReference type="FunFam" id="3.10.20.30:FF:000005">
    <property type="entry name" value="Threonine--tRNA ligase"/>
    <property type="match status" value="1"/>
</dbReference>
<dbReference type="FunFam" id="3.30.930.10:FF:000002">
    <property type="entry name" value="Threonine--tRNA ligase"/>
    <property type="match status" value="1"/>
</dbReference>
<dbReference type="FunFam" id="3.40.50.800:FF:000001">
    <property type="entry name" value="Threonine--tRNA ligase"/>
    <property type="match status" value="1"/>
</dbReference>
<dbReference type="FunFam" id="3.30.980.10:FF:000005">
    <property type="entry name" value="Threonyl-tRNA synthetase, mitochondrial"/>
    <property type="match status" value="1"/>
</dbReference>
<dbReference type="Gene3D" id="3.10.20.30">
    <property type="match status" value="1"/>
</dbReference>
<dbReference type="Gene3D" id="3.30.54.20">
    <property type="match status" value="1"/>
</dbReference>
<dbReference type="Gene3D" id="3.40.50.800">
    <property type="entry name" value="Anticodon-binding domain"/>
    <property type="match status" value="1"/>
</dbReference>
<dbReference type="Gene3D" id="3.30.930.10">
    <property type="entry name" value="Bira Bifunctional Protein, Domain 2"/>
    <property type="match status" value="1"/>
</dbReference>
<dbReference type="Gene3D" id="3.30.980.10">
    <property type="entry name" value="Threonyl-trna Synthetase, Chain A, domain 2"/>
    <property type="match status" value="1"/>
</dbReference>
<dbReference type="HAMAP" id="MF_00184">
    <property type="entry name" value="Thr_tRNA_synth"/>
    <property type="match status" value="1"/>
</dbReference>
<dbReference type="InterPro" id="IPR002314">
    <property type="entry name" value="aa-tRNA-synt_IIb"/>
</dbReference>
<dbReference type="InterPro" id="IPR006195">
    <property type="entry name" value="aa-tRNA-synth_II"/>
</dbReference>
<dbReference type="InterPro" id="IPR045864">
    <property type="entry name" value="aa-tRNA-synth_II/BPL/LPL"/>
</dbReference>
<dbReference type="InterPro" id="IPR004154">
    <property type="entry name" value="Anticodon-bd"/>
</dbReference>
<dbReference type="InterPro" id="IPR036621">
    <property type="entry name" value="Anticodon-bd_dom_sf"/>
</dbReference>
<dbReference type="InterPro" id="IPR012675">
    <property type="entry name" value="Beta-grasp_dom_sf"/>
</dbReference>
<dbReference type="InterPro" id="IPR004095">
    <property type="entry name" value="TGS"/>
</dbReference>
<dbReference type="InterPro" id="IPR012676">
    <property type="entry name" value="TGS-like"/>
</dbReference>
<dbReference type="InterPro" id="IPR002320">
    <property type="entry name" value="Thr-tRNA-ligase_IIa"/>
</dbReference>
<dbReference type="InterPro" id="IPR018163">
    <property type="entry name" value="Thr/Ala-tRNA-synth_IIc_edit"/>
</dbReference>
<dbReference type="InterPro" id="IPR047246">
    <property type="entry name" value="ThrRS_anticodon"/>
</dbReference>
<dbReference type="InterPro" id="IPR033728">
    <property type="entry name" value="ThrRS_core"/>
</dbReference>
<dbReference type="InterPro" id="IPR012947">
    <property type="entry name" value="tRNA_SAD"/>
</dbReference>
<dbReference type="NCBIfam" id="TIGR00418">
    <property type="entry name" value="thrS"/>
    <property type="match status" value="1"/>
</dbReference>
<dbReference type="PANTHER" id="PTHR11451:SF44">
    <property type="entry name" value="THREONINE--TRNA LIGASE, CHLOROPLASTIC_MITOCHONDRIAL 2"/>
    <property type="match status" value="1"/>
</dbReference>
<dbReference type="PANTHER" id="PTHR11451">
    <property type="entry name" value="THREONINE-TRNA LIGASE"/>
    <property type="match status" value="1"/>
</dbReference>
<dbReference type="Pfam" id="PF03129">
    <property type="entry name" value="HGTP_anticodon"/>
    <property type="match status" value="1"/>
</dbReference>
<dbReference type="Pfam" id="PF02824">
    <property type="entry name" value="TGS"/>
    <property type="match status" value="1"/>
</dbReference>
<dbReference type="Pfam" id="PF00587">
    <property type="entry name" value="tRNA-synt_2b"/>
    <property type="match status" value="1"/>
</dbReference>
<dbReference type="Pfam" id="PF07973">
    <property type="entry name" value="tRNA_SAD"/>
    <property type="match status" value="1"/>
</dbReference>
<dbReference type="PRINTS" id="PR01047">
    <property type="entry name" value="TRNASYNTHTHR"/>
</dbReference>
<dbReference type="SMART" id="SM00863">
    <property type="entry name" value="tRNA_SAD"/>
    <property type="match status" value="1"/>
</dbReference>
<dbReference type="SUPFAM" id="SSF52954">
    <property type="entry name" value="Class II aaRS ABD-related"/>
    <property type="match status" value="1"/>
</dbReference>
<dbReference type="SUPFAM" id="SSF55681">
    <property type="entry name" value="Class II aaRS and biotin synthetases"/>
    <property type="match status" value="1"/>
</dbReference>
<dbReference type="SUPFAM" id="SSF81271">
    <property type="entry name" value="TGS-like"/>
    <property type="match status" value="1"/>
</dbReference>
<dbReference type="SUPFAM" id="SSF55186">
    <property type="entry name" value="ThrRS/AlaRS common domain"/>
    <property type="match status" value="1"/>
</dbReference>
<dbReference type="PROSITE" id="PS50862">
    <property type="entry name" value="AA_TRNA_LIGASE_II"/>
    <property type="match status" value="1"/>
</dbReference>
<dbReference type="PROSITE" id="PS51880">
    <property type="entry name" value="TGS"/>
    <property type="match status" value="1"/>
</dbReference>
<proteinExistence type="inferred from homology"/>
<feature type="chain" id="PRO_1000020382" description="Threonine--tRNA ligase">
    <location>
        <begin position="1"/>
        <end position="640"/>
    </location>
</feature>
<feature type="domain" description="TGS" evidence="2">
    <location>
        <begin position="1"/>
        <end position="61"/>
    </location>
</feature>
<feature type="region of interest" description="Catalytic" evidence="1">
    <location>
        <begin position="243"/>
        <end position="534"/>
    </location>
</feature>
<feature type="binding site" evidence="1">
    <location>
        <position position="334"/>
    </location>
    <ligand>
        <name>Zn(2+)</name>
        <dbReference type="ChEBI" id="CHEBI:29105"/>
    </ligand>
</feature>
<feature type="binding site" evidence="1">
    <location>
        <position position="385"/>
    </location>
    <ligand>
        <name>Zn(2+)</name>
        <dbReference type="ChEBI" id="CHEBI:29105"/>
    </ligand>
</feature>
<feature type="binding site" evidence="1">
    <location>
        <position position="511"/>
    </location>
    <ligand>
        <name>Zn(2+)</name>
        <dbReference type="ChEBI" id="CHEBI:29105"/>
    </ligand>
</feature>
<comment type="function">
    <text evidence="1">Catalyzes the attachment of threonine to tRNA(Thr) in a two-step reaction: L-threonine is first activated by ATP to form Thr-AMP and then transferred to the acceptor end of tRNA(Thr). Also edits incorrectly charged L-seryl-tRNA(Thr).</text>
</comment>
<comment type="catalytic activity">
    <reaction evidence="1">
        <text>tRNA(Thr) + L-threonine + ATP = L-threonyl-tRNA(Thr) + AMP + diphosphate + H(+)</text>
        <dbReference type="Rhea" id="RHEA:24624"/>
        <dbReference type="Rhea" id="RHEA-COMP:9670"/>
        <dbReference type="Rhea" id="RHEA-COMP:9704"/>
        <dbReference type="ChEBI" id="CHEBI:15378"/>
        <dbReference type="ChEBI" id="CHEBI:30616"/>
        <dbReference type="ChEBI" id="CHEBI:33019"/>
        <dbReference type="ChEBI" id="CHEBI:57926"/>
        <dbReference type="ChEBI" id="CHEBI:78442"/>
        <dbReference type="ChEBI" id="CHEBI:78534"/>
        <dbReference type="ChEBI" id="CHEBI:456215"/>
        <dbReference type="EC" id="6.1.1.3"/>
    </reaction>
</comment>
<comment type="cofactor">
    <cofactor evidence="1">
        <name>Zn(2+)</name>
        <dbReference type="ChEBI" id="CHEBI:29105"/>
    </cofactor>
    <text evidence="1">Binds 1 zinc ion per subunit.</text>
</comment>
<comment type="subunit">
    <text evidence="1">Homodimer.</text>
</comment>
<comment type="subcellular location">
    <subcellularLocation>
        <location evidence="1">Cytoplasm</location>
    </subcellularLocation>
</comment>
<comment type="similarity">
    <text evidence="1">Belongs to the class-II aminoacyl-tRNA synthetase family.</text>
</comment>
<sequence length="640" mass="73385">MPTITLPDGSKKSFNAAITGQEIAESIGSSLAKAAIAVRIGEKLQDLSDTIACDADVTIITDKDEAGLEIIRHSCAHLLGHALKQLWPQAKMVIGPVIENGFYYDIEADHRFTPEDLAVLEERMQKLAATGYSVKKEWTPVARAREIFHERQEDFKIRLIDDFDADVKEVGLYYHQEYVDMCRGPHVPDMGKIKAFKLTKLSGSYWRGDAQAEALQRIYGVAFRSKKELDDYLTQQAEAEKRDHRKIGKALDLFHLQEEAPGMVFWHAKGWTIYREIENYMRTKLRKYGYQEVQGPQILDRSLWEKSGHWDKFGGNMFTCCIDNHDFAVKPMNCPGHVQIFNQGLKSYRELPIRYAEFGICHRNEPSGTLHGIMRVRRFVQDDGHIFCARNQVRVEIERTCRMVYEVYDDFGFKNVELALSTRPEKRVGSDEIWDEAERGLQEALEAQNLAFRLQPGEGAFYGPKIEFTLKDSLGRRWQCGTVQLDFSMPARLGAEYIDEHGEKQTPVMIHRAILGSLERFIGILIEQYAGNMPVWLSPVQAMIMPITDTHADYVQNVMQKFIAAGIRAEIDLRNEKISYKIREHTLQRVPFLLVAGDREKQSNTLSVRTRDGKELGVMEIATIIEHIRHLIETKSQEIE</sequence>
<organism>
    <name type="scientific">Dichelobacter nodosus (strain VCS1703A)</name>
    <dbReference type="NCBI Taxonomy" id="246195"/>
    <lineage>
        <taxon>Bacteria</taxon>
        <taxon>Pseudomonadati</taxon>
        <taxon>Pseudomonadota</taxon>
        <taxon>Gammaproteobacteria</taxon>
        <taxon>Cardiobacteriales</taxon>
        <taxon>Cardiobacteriaceae</taxon>
        <taxon>Dichelobacter</taxon>
    </lineage>
</organism>
<name>SYT_DICNV</name>
<gene>
    <name evidence="1" type="primary">thrS</name>
    <name type="ordered locus">DNO_0527</name>
</gene>
<evidence type="ECO:0000255" key="1">
    <source>
        <dbReference type="HAMAP-Rule" id="MF_00184"/>
    </source>
</evidence>
<evidence type="ECO:0000255" key="2">
    <source>
        <dbReference type="PROSITE-ProRule" id="PRU01228"/>
    </source>
</evidence>
<protein>
    <recommendedName>
        <fullName evidence="1">Threonine--tRNA ligase</fullName>
        <ecNumber evidence="1">6.1.1.3</ecNumber>
    </recommendedName>
    <alternativeName>
        <fullName evidence="1">Threonyl-tRNA synthetase</fullName>
        <shortName evidence="1">ThrRS</shortName>
    </alternativeName>
</protein>